<reference key="1">
    <citation type="journal article" date="2009" name="J. Bacteriol.">
        <title>Complete and draft genome sequences of six members of the Aquificales.</title>
        <authorList>
            <person name="Reysenbach A.-L."/>
            <person name="Hamamura N."/>
            <person name="Podar M."/>
            <person name="Griffiths E."/>
            <person name="Ferreira S."/>
            <person name="Hochstein R."/>
            <person name="Heidelberg J."/>
            <person name="Johnson J."/>
            <person name="Mead D."/>
            <person name="Pohorille A."/>
            <person name="Sarmiento M."/>
            <person name="Schweighofer K."/>
            <person name="Seshadri R."/>
            <person name="Voytek M.A."/>
        </authorList>
    </citation>
    <scope>NUCLEOTIDE SEQUENCE [LARGE SCALE GENOMIC DNA]</scope>
    <source>
        <strain>DSM 15241 / OCM 825 / Az-Fu1</strain>
    </source>
</reference>
<proteinExistence type="inferred from homology"/>
<organism>
    <name type="scientific">Sulfurihydrogenibium azorense (strain DSM 15241 / OCM 825 / Az-Fu1)</name>
    <dbReference type="NCBI Taxonomy" id="204536"/>
    <lineage>
        <taxon>Bacteria</taxon>
        <taxon>Pseudomonadati</taxon>
        <taxon>Aquificota</taxon>
        <taxon>Aquificia</taxon>
        <taxon>Aquificales</taxon>
        <taxon>Hydrogenothermaceae</taxon>
        <taxon>Sulfurihydrogenibium</taxon>
    </lineage>
</organism>
<protein>
    <recommendedName>
        <fullName evidence="1">Probable inorganic carbon transporter subunit DabA</fullName>
    </recommendedName>
</protein>
<feature type="chain" id="PRO_0000387320" description="Probable inorganic carbon transporter subunit DabA">
    <location>
        <begin position="1"/>
        <end position="945"/>
    </location>
</feature>
<feature type="binding site" evidence="1">
    <location>
        <position position="408"/>
    </location>
    <ligand>
        <name>Zn(2+)</name>
        <dbReference type="ChEBI" id="CHEBI:29105"/>
    </ligand>
</feature>
<feature type="binding site" evidence="1">
    <location>
        <position position="410"/>
    </location>
    <ligand>
        <name>Zn(2+)</name>
        <dbReference type="ChEBI" id="CHEBI:29105"/>
    </ligand>
</feature>
<feature type="binding site" evidence="1">
    <location>
        <position position="651"/>
    </location>
    <ligand>
        <name>Zn(2+)</name>
        <dbReference type="ChEBI" id="CHEBI:29105"/>
    </ligand>
</feature>
<feature type="binding site" evidence="1">
    <location>
        <position position="666"/>
    </location>
    <ligand>
        <name>Zn(2+)</name>
        <dbReference type="ChEBI" id="CHEBI:29105"/>
    </ligand>
</feature>
<name>DABA_SULAA</name>
<sequence length="945" mass="111715">MKTVALKEASSILPKYWPLTMFVHHNPLHELESLHFKQALKIAKDLFDAKVYMDPSYYVDLYRKGKVRKDSLEKNIEEFLRENNFNFNKYKVRKFLTDISPSWKEYKEESFNNPSIKVPDYLLEYIKKDKGYDNLDNLFYTYIKKYLFSEILDILFDQNIYNVFFNDAVEFISRFLDEGQTSITLPFREQGYWNCFRQFYKLDKHPEDIIEEFENTFQPPSLQDYARQLYIRFFGWSSFIKFRESTPFYPYQEEFPINLEDFGSSLLYLENQYIQELNKSKIKNYFDLMAFYKENKYYVILKLFEHRKILTPKYISKLYTSKDYDNIFNKFINEEIESEAKAIVNLSTKVFDKSDYLQTYNLVKTLKEDEECYLWIKSLEDSYALNFGREFIKEYQIDEKPKAFAVFCVDVRSEALRRNLERVDNYKTFGVAGFFGVKMALIEFDKAHELLLCPAMEIPDKVVLEVPTQKTQDYEKRKKLLISLKKILEGLKNNPYTPFFAVESFGWLFGYKLFGKTLFPSVVAKIDKKIKPKPPKTFYMIDKLSEKEVDTYTDKFFYEKIYQAFEKEGIKIKDCEVKDILSKLKNNENISQNYQKVLNRYRITKQYYDYIYNRFSNIGYTLDEQVILAENFLRLIGMVEDFPEFVLLVGHGSVSDNNPYESALDCGACGGNSGYHNVRAMCMILNKKEVREKLSIRIPDGTIFIPGLHNTTTDEIEFYDEDLVPENSLDKWEEIKKDFKKAGEKTRIERLSSLPYADNPEDVIVRSIDWSEMRPEWGLSKNLGVFVGKSESRINSVLKNRFFLHSYDYKIDVDNSILKRILNGPLLIAQWINAEHYFSTVDNEKFGSGSKVYHNVVSRIGVFSGNYSDLKIGLPYQTVYVEDRPFHEPIRLIAFVEAPLEKVVEAASQTDHPMMLVKNEWIRLVVIDKEKNKVFLFSNGNFVEL</sequence>
<gene>
    <name evidence="1" type="primary">dabA</name>
    <name type="ordered locus">SULAZ_0653</name>
</gene>
<accession>C1DU51</accession>
<dbReference type="EMBL" id="CP001229">
    <property type="protein sequence ID" value="ACN98964.1"/>
    <property type="molecule type" value="Genomic_DNA"/>
</dbReference>
<dbReference type="RefSeq" id="WP_012674284.1">
    <property type="nucleotide sequence ID" value="NC_012438.1"/>
</dbReference>
<dbReference type="STRING" id="204536.SULAZ_0653"/>
<dbReference type="KEGG" id="saf:SULAZ_0653"/>
<dbReference type="eggNOG" id="COG3002">
    <property type="taxonomic scope" value="Bacteria"/>
</dbReference>
<dbReference type="HOGENOM" id="CLU_009885_0_0_0"/>
<dbReference type="OrthoDB" id="9805101at2"/>
<dbReference type="Proteomes" id="UP000001369">
    <property type="component" value="Chromosome"/>
</dbReference>
<dbReference type="GO" id="GO:0005886">
    <property type="term" value="C:plasma membrane"/>
    <property type="evidence" value="ECO:0007669"/>
    <property type="project" value="UniProtKB-SubCell"/>
</dbReference>
<dbReference type="GO" id="GO:0008270">
    <property type="term" value="F:zinc ion binding"/>
    <property type="evidence" value="ECO:0007669"/>
    <property type="project" value="UniProtKB-UniRule"/>
</dbReference>
<dbReference type="HAMAP" id="MF_01871">
    <property type="entry name" value="DabA"/>
    <property type="match status" value="1"/>
</dbReference>
<dbReference type="InterPro" id="IPR018752">
    <property type="entry name" value="DabA"/>
</dbReference>
<dbReference type="PANTHER" id="PTHR38344:SF1">
    <property type="entry name" value="INORGANIC CARBON TRANSPORTER SUBUNIT DABA-RELATED"/>
    <property type="match status" value="1"/>
</dbReference>
<dbReference type="PANTHER" id="PTHR38344">
    <property type="entry name" value="UPF0753 PROTEIN AQ_863"/>
    <property type="match status" value="1"/>
</dbReference>
<dbReference type="Pfam" id="PF10070">
    <property type="entry name" value="DabA"/>
    <property type="match status" value="1"/>
</dbReference>
<keyword id="KW-0997">Cell inner membrane</keyword>
<keyword id="KW-1003">Cell membrane</keyword>
<keyword id="KW-0472">Membrane</keyword>
<keyword id="KW-0479">Metal-binding</keyword>
<keyword id="KW-1185">Reference proteome</keyword>
<keyword id="KW-0813">Transport</keyword>
<keyword id="KW-0862">Zinc</keyword>
<comment type="function">
    <text evidence="1">Part of an energy-coupled inorganic carbon pump.</text>
</comment>
<comment type="cofactor">
    <cofactor evidence="1">
        <name>Zn(2+)</name>
        <dbReference type="ChEBI" id="CHEBI:29105"/>
    </cofactor>
</comment>
<comment type="subunit">
    <text evidence="1">Forms a complex with DabB.</text>
</comment>
<comment type="subcellular location">
    <subcellularLocation>
        <location evidence="1">Cell inner membrane</location>
        <topology evidence="1">Peripheral membrane protein</topology>
    </subcellularLocation>
</comment>
<comment type="similarity">
    <text evidence="1">Belongs to the inorganic carbon transporter (TC 9.A.2) DabA family.</text>
</comment>
<evidence type="ECO:0000255" key="1">
    <source>
        <dbReference type="HAMAP-Rule" id="MF_01871"/>
    </source>
</evidence>